<feature type="chain" id="PRO_0000056615" description="Peroxiredoxin sll1621">
    <location>
        <begin position="1"/>
        <end position="189"/>
    </location>
</feature>
<feature type="domain" description="Thioredoxin" evidence="3">
    <location>
        <begin position="2"/>
        <end position="177"/>
    </location>
</feature>
<feature type="active site" description="Cysteine sulfenic acid (-SOH) intermediate (for peroxiredoxin activity)" evidence="2">
    <location>
        <position position="55"/>
    </location>
</feature>
<sequence length="189" mass="21167">MTPERVPSVVFKTRVRDESVPGPNPYRWEDKTTEQIFGGKKVVLFSLPGAFTPTCSSNHLPRYEQLFEEFQALGVDDIICLSVNDAFVMFQWGKQIGADKVKLLPDGNGEFTRKMGMLVEKSNLGFGMRSWRYSMFVNDGKIEKMFIEPEFGDNCPVDPFECSDADTMLAYLKGAEAPGVSEPVKAFVG</sequence>
<accession>P73728</accession>
<dbReference type="EC" id="1.11.1.27" evidence="2"/>
<dbReference type="EMBL" id="BA000022">
    <property type="protein sequence ID" value="BAA17776.1"/>
    <property type="molecule type" value="Genomic_DNA"/>
</dbReference>
<dbReference type="PIR" id="S74815">
    <property type="entry name" value="S74815"/>
</dbReference>
<dbReference type="SMR" id="P73728"/>
<dbReference type="IntAct" id="P73728">
    <property type="interactions" value="9"/>
</dbReference>
<dbReference type="STRING" id="1148.gene:10498643"/>
<dbReference type="PaxDb" id="1148-1652858"/>
<dbReference type="EnsemblBacteria" id="BAA17776">
    <property type="protein sequence ID" value="BAA17776"/>
    <property type="gene ID" value="BAA17776"/>
</dbReference>
<dbReference type="KEGG" id="syn:sll1621"/>
<dbReference type="eggNOG" id="COG0678">
    <property type="taxonomic scope" value="Bacteria"/>
</dbReference>
<dbReference type="InParanoid" id="P73728"/>
<dbReference type="PhylomeDB" id="P73728"/>
<dbReference type="BRENDA" id="1.11.1.24">
    <property type="organism ID" value="6192"/>
</dbReference>
<dbReference type="Proteomes" id="UP000001425">
    <property type="component" value="Chromosome"/>
</dbReference>
<dbReference type="GO" id="GO:0005737">
    <property type="term" value="C:cytoplasm"/>
    <property type="evidence" value="ECO:0000318"/>
    <property type="project" value="GO_Central"/>
</dbReference>
<dbReference type="GO" id="GO:0042802">
    <property type="term" value="F:identical protein binding"/>
    <property type="evidence" value="ECO:0000353"/>
    <property type="project" value="IntAct"/>
</dbReference>
<dbReference type="GO" id="GO:0008379">
    <property type="term" value="F:thioredoxin peroxidase activity"/>
    <property type="evidence" value="ECO:0000318"/>
    <property type="project" value="GO_Central"/>
</dbReference>
<dbReference type="GO" id="GO:0045454">
    <property type="term" value="P:cell redox homeostasis"/>
    <property type="evidence" value="ECO:0000318"/>
    <property type="project" value="GO_Central"/>
</dbReference>
<dbReference type="GO" id="GO:0034599">
    <property type="term" value="P:cellular response to oxidative stress"/>
    <property type="evidence" value="ECO:0000318"/>
    <property type="project" value="GO_Central"/>
</dbReference>
<dbReference type="GO" id="GO:0042744">
    <property type="term" value="P:hydrogen peroxide catabolic process"/>
    <property type="evidence" value="ECO:0000318"/>
    <property type="project" value="GO_Central"/>
</dbReference>
<dbReference type="CDD" id="cd03013">
    <property type="entry name" value="PRX5_like"/>
    <property type="match status" value="1"/>
</dbReference>
<dbReference type="Gene3D" id="3.40.30.10">
    <property type="entry name" value="Glutaredoxin"/>
    <property type="match status" value="1"/>
</dbReference>
<dbReference type="InterPro" id="IPR037944">
    <property type="entry name" value="PRX5-like"/>
</dbReference>
<dbReference type="InterPro" id="IPR013740">
    <property type="entry name" value="Redoxin"/>
</dbReference>
<dbReference type="InterPro" id="IPR036249">
    <property type="entry name" value="Thioredoxin-like_sf"/>
</dbReference>
<dbReference type="InterPro" id="IPR013766">
    <property type="entry name" value="Thioredoxin_domain"/>
</dbReference>
<dbReference type="PANTHER" id="PTHR10430">
    <property type="entry name" value="PEROXIREDOXIN"/>
    <property type="match status" value="1"/>
</dbReference>
<dbReference type="PANTHER" id="PTHR10430:SF16">
    <property type="entry name" value="PEROXIREDOXIN-5, MITOCHONDRIAL"/>
    <property type="match status" value="1"/>
</dbReference>
<dbReference type="Pfam" id="PF08534">
    <property type="entry name" value="Redoxin"/>
    <property type="match status" value="1"/>
</dbReference>
<dbReference type="SUPFAM" id="SSF52833">
    <property type="entry name" value="Thioredoxin-like"/>
    <property type="match status" value="1"/>
</dbReference>
<dbReference type="PROSITE" id="PS51352">
    <property type="entry name" value="THIOREDOXIN_2"/>
    <property type="match status" value="1"/>
</dbReference>
<evidence type="ECO:0000250" key="1">
    <source>
        <dbReference type="UniProtKB" id="A9PCL4"/>
    </source>
</evidence>
<evidence type="ECO:0000250" key="2">
    <source>
        <dbReference type="UniProtKB" id="P44758"/>
    </source>
</evidence>
<evidence type="ECO:0000255" key="3">
    <source>
        <dbReference type="PROSITE-ProRule" id="PRU00691"/>
    </source>
</evidence>
<evidence type="ECO:0000305" key="4"/>
<protein>
    <recommendedName>
        <fullName>Peroxiredoxin sll1621</fullName>
        <shortName>Prx</shortName>
        <ecNumber evidence="2">1.11.1.27</ecNumber>
    </recommendedName>
    <alternativeName>
        <fullName evidence="4">Glutathione-dependent peroxiredoxin</fullName>
    </alternativeName>
</protein>
<comment type="function">
    <text evidence="2">Thiol-specific peroxidase that catalyzes the reduction of hydrogen peroxide and organic hydroperoxides to water and alcohols, respectively. Plays a role in cell protection against oxidative stress by detoxifying peroxides.</text>
</comment>
<comment type="catalytic activity">
    <reaction evidence="2">
        <text>a hydroperoxide + 2 glutathione = an alcohol + glutathione disulfide + H2O</text>
        <dbReference type="Rhea" id="RHEA:62632"/>
        <dbReference type="ChEBI" id="CHEBI:15377"/>
        <dbReference type="ChEBI" id="CHEBI:30879"/>
        <dbReference type="ChEBI" id="CHEBI:35924"/>
        <dbReference type="ChEBI" id="CHEBI:57925"/>
        <dbReference type="ChEBI" id="CHEBI:58297"/>
        <dbReference type="EC" id="1.11.1.27"/>
    </reaction>
</comment>
<comment type="subunit">
    <text evidence="1">Monomer.</text>
</comment>
<comment type="interaction">
    <interactant intactId="EBI-862771">
        <id>P73728</id>
    </interactant>
    <interactant intactId="EBI-862771">
        <id>P73728</id>
        <label>sll1621</label>
    </interactant>
    <organismsDiffer>false</organismsDiffer>
    <experiments>2</experiments>
</comment>
<comment type="interaction">
    <interactant intactId="EBI-862771">
        <id>P73728</id>
    </interactant>
    <interactant intactId="EBI-863606">
        <id>P52232</id>
        <label>slr0233</label>
    </interactant>
    <organismsDiffer>false</organismsDiffer>
    <experiments>2</experiments>
</comment>
<comment type="interaction">
    <interactant intactId="EBI-862771">
        <id>P73728</id>
    </interactant>
    <interactant intactId="EBI-862065">
        <id>P73263</id>
        <label>slr1139</label>
    </interactant>
    <organismsDiffer>false</organismsDiffer>
    <experiments>4</experiments>
</comment>
<comment type="interaction">
    <interactant intactId="EBI-862771">
        <id>P73728</id>
    </interactant>
    <interactant intactId="EBI-862916">
        <id>P52231</id>
        <label>trxA</label>
    </interactant>
    <organismsDiffer>false</organismsDiffer>
    <experiments>3</experiments>
</comment>
<comment type="miscellaneous">
    <text evidence="1">The active site is a conserved redox-active cysteine residue, the peroxidatic cysteine (C(P)), which makes the nucleophilic attack on the peroxide substrate. The peroxide oxidizes the C(P)-SH to cysteine sulfenic acid (C(P)-SOH), which then reacts with another cysteine residue, the resolving cysteine (C(R)), to form a disulfide bridge. The disulfide is subsequently reduced by an appropriate electron donor to complete the catalytic cycle. In this 1-Cys peroxiredoxin, no C(R) is present and C(P) instead forms a disulfide with a cysteine from another protein or with a small thiol molecule.</text>
</comment>
<comment type="similarity">
    <text evidence="4">Belongs to the peroxiredoxin family. Prx5 subfamily.</text>
</comment>
<gene>
    <name type="ordered locus">sll1621</name>
</gene>
<reference key="1">
    <citation type="journal article" date="1996" name="DNA Res.">
        <title>Sequence analysis of the genome of the unicellular cyanobacterium Synechocystis sp. strain PCC6803. II. Sequence determination of the entire genome and assignment of potential protein-coding regions.</title>
        <authorList>
            <person name="Kaneko T."/>
            <person name="Sato S."/>
            <person name="Kotani H."/>
            <person name="Tanaka A."/>
            <person name="Asamizu E."/>
            <person name="Nakamura Y."/>
            <person name="Miyajima N."/>
            <person name="Hirosawa M."/>
            <person name="Sugiura M."/>
            <person name="Sasamoto S."/>
            <person name="Kimura T."/>
            <person name="Hosouchi T."/>
            <person name="Matsuno A."/>
            <person name="Muraki A."/>
            <person name="Nakazaki N."/>
            <person name="Naruo K."/>
            <person name="Okumura S."/>
            <person name="Shimpo S."/>
            <person name="Takeuchi C."/>
            <person name="Wada T."/>
            <person name="Watanabe A."/>
            <person name="Yamada M."/>
            <person name="Yasuda M."/>
            <person name="Tabata S."/>
        </authorList>
    </citation>
    <scope>NUCLEOTIDE SEQUENCE [LARGE SCALE GENOMIC DNA]</scope>
    <source>
        <strain>ATCC 27184 / PCC 6803 / Kazusa</strain>
    </source>
</reference>
<reference key="2">
    <citation type="journal article" date="1997" name="Electrophoresis">
        <title>Towards a proteome project of cyanobacterium Synechocystis sp. strain PCC6803: linking 130 protein spots with their respective genes.</title>
        <authorList>
            <person name="Sazuka T."/>
            <person name="Ohara O."/>
        </authorList>
    </citation>
    <scope>PROTEIN SEQUENCE OF 1-10</scope>
</reference>
<organism>
    <name type="scientific">Synechocystis sp. (strain ATCC 27184 / PCC 6803 / Kazusa)</name>
    <dbReference type="NCBI Taxonomy" id="1111708"/>
    <lineage>
        <taxon>Bacteria</taxon>
        <taxon>Bacillati</taxon>
        <taxon>Cyanobacteriota</taxon>
        <taxon>Cyanophyceae</taxon>
        <taxon>Synechococcales</taxon>
        <taxon>Merismopediaceae</taxon>
        <taxon>Synechocystis</taxon>
    </lineage>
</organism>
<name>PRX5_SYNY3</name>
<proteinExistence type="evidence at protein level"/>
<keyword id="KW-0049">Antioxidant</keyword>
<keyword id="KW-0903">Direct protein sequencing</keyword>
<keyword id="KW-0560">Oxidoreductase</keyword>
<keyword id="KW-0575">Peroxidase</keyword>
<keyword id="KW-0676">Redox-active center</keyword>
<keyword id="KW-1185">Reference proteome</keyword>